<keyword id="KW-0150">Chloroplast</keyword>
<keyword id="KW-0349">Heme</keyword>
<keyword id="KW-0408">Iron</keyword>
<keyword id="KW-0479">Metal-binding</keyword>
<keyword id="KW-0560">Oxidoreductase</keyword>
<keyword id="KW-0602">Photosynthesis</keyword>
<keyword id="KW-0934">Plastid</keyword>
<proteinExistence type="inferred from homology"/>
<sequence length="237" mass="27631">MSNNLAIQLREGTSKSHSMAENVSFVKSFLSGVIDTNSYKKMMSNLYFVYKAMEEEMEYHKENDLIKPIYFVELNRSESLALDLNFYYGDTWKDIIEPSEATRVYINRIKKISKEKPLLLIAHAYTRYLGDLSGGQILKKIAQRALNVPNSQGLAFYEFDKIDDEQAFKQKYKKALDTLPVTDKMISQIVAEANIAFNLNMRMFQELEMSYIRIFTKILMQFLINSKDKLRVMLNFS</sequence>
<feature type="chain" id="PRO_0000209698" description="Heme oxygenase">
    <location>
        <begin position="1"/>
        <end position="237"/>
    </location>
</feature>
<feature type="binding site" description="axial binding residue" evidence="1">
    <location>
        <position position="17"/>
    </location>
    <ligand>
        <name>heme b</name>
        <dbReference type="ChEBI" id="CHEBI:60344"/>
    </ligand>
    <ligandPart>
        <name>Fe</name>
        <dbReference type="ChEBI" id="CHEBI:18248"/>
    </ligandPart>
</feature>
<reference key="1">
    <citation type="journal article" date="1999" name="J. Mol. Evol.">
        <title>The plastid genome of the cryptophyte alga, Guillardia theta: complete sequence and conserved synteny groups confirm its common ancestry with red algae.</title>
        <authorList>
            <person name="Douglas S.E."/>
            <person name="Penny S.L."/>
        </authorList>
    </citation>
    <scope>NUCLEOTIDE SEQUENCE [LARGE SCALE GENOMIC DNA]</scope>
</reference>
<gene>
    <name type="primary">pbsA</name>
</gene>
<comment type="function">
    <text>Catalyzes the opening of the heme ring with the release of iron. Key enzyme in the synthesis of the chromophoric part of the photosynthetic antennae.</text>
</comment>
<comment type="catalytic activity">
    <reaction evidence="2">
        <text>heme b + 3 reduced [NADPH--hemoprotein reductase] + 3 O2 = biliverdin IXalpha + CO + Fe(2+) + 3 oxidized [NADPH--hemoprotein reductase] + 3 H2O + H(+)</text>
        <dbReference type="Rhea" id="RHEA:21764"/>
        <dbReference type="Rhea" id="RHEA-COMP:11964"/>
        <dbReference type="Rhea" id="RHEA-COMP:11965"/>
        <dbReference type="ChEBI" id="CHEBI:15377"/>
        <dbReference type="ChEBI" id="CHEBI:15378"/>
        <dbReference type="ChEBI" id="CHEBI:15379"/>
        <dbReference type="ChEBI" id="CHEBI:17245"/>
        <dbReference type="ChEBI" id="CHEBI:29033"/>
        <dbReference type="ChEBI" id="CHEBI:57618"/>
        <dbReference type="ChEBI" id="CHEBI:57991"/>
        <dbReference type="ChEBI" id="CHEBI:58210"/>
        <dbReference type="ChEBI" id="CHEBI:60344"/>
        <dbReference type="EC" id="1.14.14.18"/>
    </reaction>
</comment>
<comment type="subcellular location">
    <subcellularLocation>
        <location>Plastid</location>
        <location>Chloroplast</location>
    </subcellularLocation>
</comment>
<comment type="similarity">
    <text evidence="3">Belongs to the heme oxygenase family.</text>
</comment>
<accession>O78497</accession>
<organism>
    <name type="scientific">Guillardia theta</name>
    <name type="common">Cryptophyte</name>
    <name type="synonym">Cryptomonas phi</name>
    <dbReference type="NCBI Taxonomy" id="55529"/>
    <lineage>
        <taxon>Eukaryota</taxon>
        <taxon>Cryptophyceae</taxon>
        <taxon>Pyrenomonadales</taxon>
        <taxon>Geminigeraceae</taxon>
        <taxon>Guillardia</taxon>
    </lineage>
</organism>
<protein>
    <recommendedName>
        <fullName>Heme oxygenase</fullName>
        <ecNumber evidence="2">1.14.14.18</ecNumber>
    </recommendedName>
</protein>
<evidence type="ECO:0000250" key="1"/>
<evidence type="ECO:0000250" key="2">
    <source>
        <dbReference type="UniProtKB" id="O48782"/>
    </source>
</evidence>
<evidence type="ECO:0000305" key="3"/>
<geneLocation type="chloroplast"/>
<dbReference type="EC" id="1.14.14.18" evidence="2"/>
<dbReference type="EMBL" id="AF041468">
    <property type="protein sequence ID" value="AAC35688.1"/>
    <property type="molecule type" value="Genomic_DNA"/>
</dbReference>
<dbReference type="RefSeq" id="NP_050754.1">
    <property type="nucleotide sequence ID" value="NC_000926.1"/>
</dbReference>
<dbReference type="SMR" id="O78497"/>
<dbReference type="GeneID" id="857059"/>
<dbReference type="HOGENOM" id="CLU_057050_2_0_1"/>
<dbReference type="OMA" id="TEQLWFV"/>
<dbReference type="GO" id="GO:0009507">
    <property type="term" value="C:chloroplast"/>
    <property type="evidence" value="ECO:0007669"/>
    <property type="project" value="UniProtKB-SubCell"/>
</dbReference>
<dbReference type="GO" id="GO:0020037">
    <property type="term" value="F:heme binding"/>
    <property type="evidence" value="ECO:0007669"/>
    <property type="project" value="TreeGrafter"/>
</dbReference>
<dbReference type="GO" id="GO:0004392">
    <property type="term" value="F:heme oxygenase (decyclizing) activity"/>
    <property type="evidence" value="ECO:0007669"/>
    <property type="project" value="UniProtKB-EC"/>
</dbReference>
<dbReference type="GO" id="GO:0046872">
    <property type="term" value="F:metal ion binding"/>
    <property type="evidence" value="ECO:0007669"/>
    <property type="project" value="UniProtKB-KW"/>
</dbReference>
<dbReference type="GO" id="GO:0042167">
    <property type="term" value="P:heme catabolic process"/>
    <property type="evidence" value="ECO:0007669"/>
    <property type="project" value="TreeGrafter"/>
</dbReference>
<dbReference type="GO" id="GO:0006788">
    <property type="term" value="P:heme oxidation"/>
    <property type="evidence" value="ECO:0007669"/>
    <property type="project" value="InterPro"/>
</dbReference>
<dbReference type="GO" id="GO:0015979">
    <property type="term" value="P:photosynthesis"/>
    <property type="evidence" value="ECO:0007669"/>
    <property type="project" value="UniProtKB-KW"/>
</dbReference>
<dbReference type="GO" id="GO:0006979">
    <property type="term" value="P:response to oxidative stress"/>
    <property type="evidence" value="ECO:0007669"/>
    <property type="project" value="TreeGrafter"/>
</dbReference>
<dbReference type="CDD" id="cd19165">
    <property type="entry name" value="HemeO"/>
    <property type="match status" value="1"/>
</dbReference>
<dbReference type="FunFam" id="1.20.910.10:FF:000001">
    <property type="entry name" value="Heme oxygenase 1"/>
    <property type="match status" value="1"/>
</dbReference>
<dbReference type="Gene3D" id="1.20.910.10">
    <property type="entry name" value="Heme oxygenase-like"/>
    <property type="match status" value="1"/>
</dbReference>
<dbReference type="InterPro" id="IPR002051">
    <property type="entry name" value="Haem_Oase"/>
</dbReference>
<dbReference type="InterPro" id="IPR016053">
    <property type="entry name" value="Haem_Oase-like"/>
</dbReference>
<dbReference type="InterPro" id="IPR016084">
    <property type="entry name" value="Haem_Oase-like_multi-hlx"/>
</dbReference>
<dbReference type="InterPro" id="IPR018207">
    <property type="entry name" value="Haem_oxygenase_CS"/>
</dbReference>
<dbReference type="PANTHER" id="PTHR10720">
    <property type="entry name" value="HEME OXYGENASE"/>
    <property type="match status" value="1"/>
</dbReference>
<dbReference type="PANTHER" id="PTHR10720:SF0">
    <property type="entry name" value="HEME OXYGENASE"/>
    <property type="match status" value="1"/>
</dbReference>
<dbReference type="Pfam" id="PF01126">
    <property type="entry name" value="Heme_oxygenase"/>
    <property type="match status" value="1"/>
</dbReference>
<dbReference type="PIRSF" id="PIRSF000343">
    <property type="entry name" value="Haem_Oase"/>
    <property type="match status" value="1"/>
</dbReference>
<dbReference type="PRINTS" id="PR00088">
    <property type="entry name" value="HAEMOXYGNASE"/>
</dbReference>
<dbReference type="SUPFAM" id="SSF48613">
    <property type="entry name" value="Heme oxygenase-like"/>
    <property type="match status" value="1"/>
</dbReference>
<dbReference type="PROSITE" id="PS00593">
    <property type="entry name" value="HEME_OXYGENASE"/>
    <property type="match status" value="1"/>
</dbReference>
<name>HO_GUITH</name>